<feature type="chain" id="PRO_1000123070" description="Lipid-A-disaccharide synthase">
    <location>
        <begin position="1"/>
        <end position="385"/>
    </location>
</feature>
<accession>B0U236</accession>
<reference key="1">
    <citation type="journal article" date="2010" name="J. Bacteriol.">
        <title>Whole genome sequences of two Xylella fastidiosa strains (M12 and M23) causing almond leaf scorch disease in California.</title>
        <authorList>
            <person name="Chen J."/>
            <person name="Xie G."/>
            <person name="Han S."/>
            <person name="Chertkov O."/>
            <person name="Sims D."/>
            <person name="Civerolo E.L."/>
        </authorList>
    </citation>
    <scope>NUCLEOTIDE SEQUENCE [LARGE SCALE GENOMIC DNA]</scope>
    <source>
        <strain>M12</strain>
    </source>
</reference>
<gene>
    <name evidence="1" type="primary">lpxB</name>
    <name type="ordered locus">Xfasm12_0353</name>
</gene>
<comment type="function">
    <text evidence="1">Condensation of UDP-2,3-diacylglucosamine and 2,3-diacylglucosamine-1-phosphate to form lipid A disaccharide, a precursor of lipid A, a phosphorylated glycolipid that anchors the lipopolysaccharide to the outer membrane of the cell.</text>
</comment>
<comment type="catalytic activity">
    <reaction evidence="1">
        <text>a lipid X + a UDP-2-N,3-O-bis[(3R)-3-hydroxyacyl]-alpha-D-glucosamine = a lipid A disaccharide + UDP + H(+)</text>
        <dbReference type="Rhea" id="RHEA:67828"/>
        <dbReference type="ChEBI" id="CHEBI:15378"/>
        <dbReference type="ChEBI" id="CHEBI:58223"/>
        <dbReference type="ChEBI" id="CHEBI:137748"/>
        <dbReference type="ChEBI" id="CHEBI:176338"/>
        <dbReference type="ChEBI" id="CHEBI:176343"/>
        <dbReference type="EC" id="2.4.1.182"/>
    </reaction>
</comment>
<comment type="pathway">
    <text evidence="1">Bacterial outer membrane biogenesis; LPS lipid A biosynthesis.</text>
</comment>
<comment type="similarity">
    <text evidence="1">Belongs to the LpxB family.</text>
</comment>
<dbReference type="EC" id="2.4.1.182" evidence="1"/>
<dbReference type="EMBL" id="CP000941">
    <property type="protein sequence ID" value="ACA11370.1"/>
    <property type="molecule type" value="Genomic_DNA"/>
</dbReference>
<dbReference type="SMR" id="B0U236"/>
<dbReference type="CAZy" id="GT19">
    <property type="family name" value="Glycosyltransferase Family 19"/>
</dbReference>
<dbReference type="KEGG" id="xfm:Xfasm12_0353"/>
<dbReference type="HOGENOM" id="CLU_036577_3_0_6"/>
<dbReference type="UniPathway" id="UPA00973"/>
<dbReference type="GO" id="GO:0016020">
    <property type="term" value="C:membrane"/>
    <property type="evidence" value="ECO:0007669"/>
    <property type="project" value="GOC"/>
</dbReference>
<dbReference type="GO" id="GO:0008915">
    <property type="term" value="F:lipid-A-disaccharide synthase activity"/>
    <property type="evidence" value="ECO:0007669"/>
    <property type="project" value="UniProtKB-UniRule"/>
</dbReference>
<dbReference type="GO" id="GO:0005543">
    <property type="term" value="F:phospholipid binding"/>
    <property type="evidence" value="ECO:0007669"/>
    <property type="project" value="TreeGrafter"/>
</dbReference>
<dbReference type="GO" id="GO:0009245">
    <property type="term" value="P:lipid A biosynthetic process"/>
    <property type="evidence" value="ECO:0007669"/>
    <property type="project" value="UniProtKB-UniRule"/>
</dbReference>
<dbReference type="CDD" id="cd01635">
    <property type="entry name" value="Glycosyltransferase_GTB-type"/>
    <property type="match status" value="1"/>
</dbReference>
<dbReference type="HAMAP" id="MF_00392">
    <property type="entry name" value="LpxB"/>
    <property type="match status" value="1"/>
</dbReference>
<dbReference type="InterPro" id="IPR003835">
    <property type="entry name" value="Glyco_trans_19"/>
</dbReference>
<dbReference type="NCBIfam" id="TIGR00215">
    <property type="entry name" value="lpxB"/>
    <property type="match status" value="1"/>
</dbReference>
<dbReference type="PANTHER" id="PTHR30372">
    <property type="entry name" value="LIPID-A-DISACCHARIDE SYNTHASE"/>
    <property type="match status" value="1"/>
</dbReference>
<dbReference type="PANTHER" id="PTHR30372:SF4">
    <property type="entry name" value="LIPID-A-DISACCHARIDE SYNTHASE, MITOCHONDRIAL-RELATED"/>
    <property type="match status" value="1"/>
</dbReference>
<dbReference type="Pfam" id="PF02684">
    <property type="entry name" value="LpxB"/>
    <property type="match status" value="1"/>
</dbReference>
<dbReference type="SUPFAM" id="SSF53756">
    <property type="entry name" value="UDP-Glycosyltransferase/glycogen phosphorylase"/>
    <property type="match status" value="1"/>
</dbReference>
<sequence>MIQAPRIALIAGEASGDHLGAGLIQQLRLHFPTAEFIGIGGDMMRSAGCQTWFDTTELAVMGLTEVLRHLPRLLKIRREFCKRALAWHPDVLIGIDAPDFNLTVERWFKQRHIRTVHYVSPSIWAWREKRAAKIGASVDRVLCLFPMEPPIYARYGIDARFVGHPMADEIPYQTDRATARTALGLPLLSPVLAVLPGSRHSEISQLGNTFLEAAGQLSEHLPGLHVVIPAANTQCKPLLAEQLSRSTLPVMHSHLLDSSARTAMLAADVVLVASGTATLEAMLLKRPMVVAYKVAPLTYRIVKTLKLLKINRFALPNILAGEDLAPELIQKDCTAPALCAALLHWFKHPQKVTALQNRYLQLHTQLRRNASTRAAEAIAELLQQR</sequence>
<name>LPXB_XYLFM</name>
<evidence type="ECO:0000255" key="1">
    <source>
        <dbReference type="HAMAP-Rule" id="MF_00392"/>
    </source>
</evidence>
<keyword id="KW-0328">Glycosyltransferase</keyword>
<keyword id="KW-0441">Lipid A biosynthesis</keyword>
<keyword id="KW-0444">Lipid biosynthesis</keyword>
<keyword id="KW-0443">Lipid metabolism</keyword>
<keyword id="KW-0808">Transferase</keyword>
<proteinExistence type="inferred from homology"/>
<protein>
    <recommendedName>
        <fullName evidence="1">Lipid-A-disaccharide synthase</fullName>
        <ecNumber evidence="1">2.4.1.182</ecNumber>
    </recommendedName>
</protein>
<organism>
    <name type="scientific">Xylella fastidiosa (strain M12)</name>
    <dbReference type="NCBI Taxonomy" id="405440"/>
    <lineage>
        <taxon>Bacteria</taxon>
        <taxon>Pseudomonadati</taxon>
        <taxon>Pseudomonadota</taxon>
        <taxon>Gammaproteobacteria</taxon>
        <taxon>Lysobacterales</taxon>
        <taxon>Lysobacteraceae</taxon>
        <taxon>Xylella</taxon>
    </lineage>
</organism>